<name>BIOF_SHIDS</name>
<organism>
    <name type="scientific">Shigella dysenteriae serotype 1 (strain Sd197)</name>
    <dbReference type="NCBI Taxonomy" id="300267"/>
    <lineage>
        <taxon>Bacteria</taxon>
        <taxon>Pseudomonadati</taxon>
        <taxon>Pseudomonadota</taxon>
        <taxon>Gammaproteobacteria</taxon>
        <taxon>Enterobacterales</taxon>
        <taxon>Enterobacteriaceae</taxon>
        <taxon>Shigella</taxon>
    </lineage>
</organism>
<sequence>MSWQEKINAALDARRAADALRRRYPVAQGAGRWLVADDRQYLNFSSNDYLGLSHHPQIIRAWKQGAEQFGVGSGGSGHVSGYSVAHQALEEELAEWLGYSRALLFISGFAANQAVIAAMMAKEDRIVADRLSHASLLEAASLSPSQLRRFVHNDVTHLARLLASPCPGQQLVVTEGVFSMDGDSAPLGEIQQVTQQHNGWLMVDDAHGTGVIGEQGRGSCWLQKVKPELLVVTFGKGFGVSGAAVLCSSTVADYLLQFARHLIYSTSMPPAQAQALRASLAVIRSDEGDARREKLAALITRFRAGVQDLPFTLADSCSAIQPLIVGDNSRALQLAEKLRQQGCWVTAIRPPTVPAGTARLRLTLTAAHEMQDIDRLLEVLHGNG</sequence>
<comment type="function">
    <text evidence="1">Catalyzes the decarboxylative condensation of pimeloyl-[acyl-carrier protein] and L-alanine to produce 8-amino-7-oxononanoate (AON), [acyl-carrier protein], and carbon dioxide.</text>
</comment>
<comment type="catalytic activity">
    <reaction evidence="1">
        <text>6-carboxyhexanoyl-[ACP] + L-alanine + H(+) = (8S)-8-amino-7-oxononanoate + holo-[ACP] + CO2</text>
        <dbReference type="Rhea" id="RHEA:42288"/>
        <dbReference type="Rhea" id="RHEA-COMP:9685"/>
        <dbReference type="Rhea" id="RHEA-COMP:9955"/>
        <dbReference type="ChEBI" id="CHEBI:15378"/>
        <dbReference type="ChEBI" id="CHEBI:16526"/>
        <dbReference type="ChEBI" id="CHEBI:57972"/>
        <dbReference type="ChEBI" id="CHEBI:64479"/>
        <dbReference type="ChEBI" id="CHEBI:78846"/>
        <dbReference type="ChEBI" id="CHEBI:149468"/>
        <dbReference type="EC" id="2.3.1.47"/>
    </reaction>
</comment>
<comment type="cofactor">
    <cofactor evidence="1">
        <name>pyridoxal 5'-phosphate</name>
        <dbReference type="ChEBI" id="CHEBI:597326"/>
    </cofactor>
</comment>
<comment type="pathway">
    <text evidence="1">Cofactor biosynthesis; biotin biosynthesis.</text>
</comment>
<comment type="subunit">
    <text evidence="1">Homodimer.</text>
</comment>
<comment type="similarity">
    <text evidence="1">Belongs to the class-II pyridoxal-phosphate-dependent aminotransferase family. BioF subfamily.</text>
</comment>
<evidence type="ECO:0000255" key="1">
    <source>
        <dbReference type="HAMAP-Rule" id="MF_01693"/>
    </source>
</evidence>
<keyword id="KW-0093">Biotin biosynthesis</keyword>
<keyword id="KW-0663">Pyridoxal phosphate</keyword>
<keyword id="KW-1185">Reference proteome</keyword>
<keyword id="KW-0808">Transferase</keyword>
<feature type="chain" id="PRO_0000381110" description="8-amino-7-oxononanoate synthase">
    <location>
        <begin position="1"/>
        <end position="384"/>
    </location>
</feature>
<feature type="binding site" evidence="1">
    <location>
        <position position="21"/>
    </location>
    <ligand>
        <name>substrate</name>
    </ligand>
</feature>
<feature type="binding site" evidence="1">
    <location>
        <begin position="108"/>
        <end position="109"/>
    </location>
    <ligand>
        <name>pyridoxal 5'-phosphate</name>
        <dbReference type="ChEBI" id="CHEBI:597326"/>
    </ligand>
</feature>
<feature type="binding site" evidence="1">
    <location>
        <position position="133"/>
    </location>
    <ligand>
        <name>substrate</name>
    </ligand>
</feature>
<feature type="binding site" evidence="1">
    <location>
        <position position="179"/>
    </location>
    <ligand>
        <name>pyridoxal 5'-phosphate</name>
        <dbReference type="ChEBI" id="CHEBI:597326"/>
    </ligand>
</feature>
<feature type="binding site" evidence="1">
    <location>
        <position position="207"/>
    </location>
    <ligand>
        <name>pyridoxal 5'-phosphate</name>
        <dbReference type="ChEBI" id="CHEBI:597326"/>
    </ligand>
</feature>
<feature type="binding site" evidence="1">
    <location>
        <position position="233"/>
    </location>
    <ligand>
        <name>pyridoxal 5'-phosphate</name>
        <dbReference type="ChEBI" id="CHEBI:597326"/>
    </ligand>
</feature>
<feature type="binding site" evidence="1">
    <location>
        <position position="352"/>
    </location>
    <ligand>
        <name>substrate</name>
    </ligand>
</feature>
<feature type="modified residue" description="N6-(pyridoxal phosphate)lysine" evidence="1">
    <location>
        <position position="236"/>
    </location>
</feature>
<accession>Q32I45</accession>
<protein>
    <recommendedName>
        <fullName evidence="1">8-amino-7-oxononanoate synthase</fullName>
        <shortName evidence="1">AONS</shortName>
        <ecNumber evidence="1">2.3.1.47</ecNumber>
    </recommendedName>
    <alternativeName>
        <fullName evidence="1">7-keto-8-amino-pelargonic acid synthase</fullName>
        <shortName evidence="1">7-KAP synthase</shortName>
        <shortName evidence="1">KAPA synthase</shortName>
    </alternativeName>
    <alternativeName>
        <fullName evidence="1">8-amino-7-ketopelargonate synthase</fullName>
    </alternativeName>
</protein>
<gene>
    <name evidence="1" type="primary">bioF</name>
    <name type="ordered locus">SDY_0830</name>
</gene>
<dbReference type="EC" id="2.3.1.47" evidence="1"/>
<dbReference type="EMBL" id="CP000034">
    <property type="protein sequence ID" value="ABB61012.1"/>
    <property type="molecule type" value="Genomic_DNA"/>
</dbReference>
<dbReference type="RefSeq" id="WP_000118818.1">
    <property type="nucleotide sequence ID" value="NC_007606.1"/>
</dbReference>
<dbReference type="RefSeq" id="YP_402501.1">
    <property type="nucleotide sequence ID" value="NC_007606.1"/>
</dbReference>
<dbReference type="SMR" id="Q32I45"/>
<dbReference type="STRING" id="300267.SDY_0830"/>
<dbReference type="EnsemblBacteria" id="ABB61012">
    <property type="protein sequence ID" value="ABB61012"/>
    <property type="gene ID" value="SDY_0830"/>
</dbReference>
<dbReference type="KEGG" id="sdy:SDY_0830"/>
<dbReference type="PATRIC" id="fig|300267.13.peg.956"/>
<dbReference type="HOGENOM" id="CLU_015846_11_2_6"/>
<dbReference type="UniPathway" id="UPA00078"/>
<dbReference type="Proteomes" id="UP000002716">
    <property type="component" value="Chromosome"/>
</dbReference>
<dbReference type="GO" id="GO:0008710">
    <property type="term" value="F:8-amino-7-oxononanoate synthase activity"/>
    <property type="evidence" value="ECO:0007669"/>
    <property type="project" value="UniProtKB-UniRule"/>
</dbReference>
<dbReference type="GO" id="GO:0030170">
    <property type="term" value="F:pyridoxal phosphate binding"/>
    <property type="evidence" value="ECO:0007669"/>
    <property type="project" value="UniProtKB-UniRule"/>
</dbReference>
<dbReference type="GO" id="GO:0009102">
    <property type="term" value="P:biotin biosynthetic process"/>
    <property type="evidence" value="ECO:0007669"/>
    <property type="project" value="UniProtKB-UniRule"/>
</dbReference>
<dbReference type="CDD" id="cd06454">
    <property type="entry name" value="KBL_like"/>
    <property type="match status" value="1"/>
</dbReference>
<dbReference type="FunFam" id="3.40.640.10:FF:000095">
    <property type="entry name" value="8-amino-7-oxononanoate synthase"/>
    <property type="match status" value="1"/>
</dbReference>
<dbReference type="FunFam" id="3.90.1150.10:FF:000036">
    <property type="entry name" value="8-amino-7-oxononanoate synthase"/>
    <property type="match status" value="1"/>
</dbReference>
<dbReference type="Gene3D" id="3.90.1150.10">
    <property type="entry name" value="Aspartate Aminotransferase, domain 1"/>
    <property type="match status" value="1"/>
</dbReference>
<dbReference type="Gene3D" id="3.40.640.10">
    <property type="entry name" value="Type I PLP-dependent aspartate aminotransferase-like (Major domain)"/>
    <property type="match status" value="1"/>
</dbReference>
<dbReference type="HAMAP" id="MF_01693">
    <property type="entry name" value="BioF_aminotrans_2"/>
    <property type="match status" value="1"/>
</dbReference>
<dbReference type="InterPro" id="IPR001917">
    <property type="entry name" value="Aminotrans_II_pyridoxalP_BS"/>
</dbReference>
<dbReference type="InterPro" id="IPR004839">
    <property type="entry name" value="Aminotransferase_I/II_large"/>
</dbReference>
<dbReference type="InterPro" id="IPR050087">
    <property type="entry name" value="AON_synthase_class-II"/>
</dbReference>
<dbReference type="InterPro" id="IPR004723">
    <property type="entry name" value="AONS_Archaea/Proteobacteria"/>
</dbReference>
<dbReference type="InterPro" id="IPR022834">
    <property type="entry name" value="AONS_Proteobacteria"/>
</dbReference>
<dbReference type="InterPro" id="IPR015424">
    <property type="entry name" value="PyrdxlP-dep_Trfase"/>
</dbReference>
<dbReference type="InterPro" id="IPR015421">
    <property type="entry name" value="PyrdxlP-dep_Trfase_major"/>
</dbReference>
<dbReference type="InterPro" id="IPR015422">
    <property type="entry name" value="PyrdxlP-dep_Trfase_small"/>
</dbReference>
<dbReference type="NCBIfam" id="TIGR00858">
    <property type="entry name" value="bioF"/>
    <property type="match status" value="1"/>
</dbReference>
<dbReference type="PANTHER" id="PTHR13693:SF100">
    <property type="entry name" value="8-AMINO-7-OXONONANOATE SYNTHASE"/>
    <property type="match status" value="1"/>
</dbReference>
<dbReference type="PANTHER" id="PTHR13693">
    <property type="entry name" value="CLASS II AMINOTRANSFERASE/8-AMINO-7-OXONONANOATE SYNTHASE"/>
    <property type="match status" value="1"/>
</dbReference>
<dbReference type="Pfam" id="PF00155">
    <property type="entry name" value="Aminotran_1_2"/>
    <property type="match status" value="1"/>
</dbReference>
<dbReference type="SUPFAM" id="SSF53383">
    <property type="entry name" value="PLP-dependent transferases"/>
    <property type="match status" value="1"/>
</dbReference>
<dbReference type="PROSITE" id="PS00599">
    <property type="entry name" value="AA_TRANSFER_CLASS_2"/>
    <property type="match status" value="1"/>
</dbReference>
<proteinExistence type="inferred from homology"/>
<reference key="1">
    <citation type="journal article" date="2005" name="Nucleic Acids Res.">
        <title>Genome dynamics and diversity of Shigella species, the etiologic agents of bacillary dysentery.</title>
        <authorList>
            <person name="Yang F."/>
            <person name="Yang J."/>
            <person name="Zhang X."/>
            <person name="Chen L."/>
            <person name="Jiang Y."/>
            <person name="Yan Y."/>
            <person name="Tang X."/>
            <person name="Wang J."/>
            <person name="Xiong Z."/>
            <person name="Dong J."/>
            <person name="Xue Y."/>
            <person name="Zhu Y."/>
            <person name="Xu X."/>
            <person name="Sun L."/>
            <person name="Chen S."/>
            <person name="Nie H."/>
            <person name="Peng J."/>
            <person name="Xu J."/>
            <person name="Wang Y."/>
            <person name="Yuan Z."/>
            <person name="Wen Y."/>
            <person name="Yao Z."/>
            <person name="Shen Y."/>
            <person name="Qiang B."/>
            <person name="Hou Y."/>
            <person name="Yu J."/>
            <person name="Jin Q."/>
        </authorList>
    </citation>
    <scope>NUCLEOTIDE SEQUENCE [LARGE SCALE GENOMIC DNA]</scope>
    <source>
        <strain>Sd197</strain>
    </source>
</reference>